<gene>
    <name evidence="1" type="primary">tsaD</name>
    <name type="synonym">gcp</name>
    <name type="ordered locus">PputW619_4812</name>
</gene>
<sequence length="341" mass="36617">MLVLGLETSCDETGVALYDSERGLLADALFSQIDLHRVFGGVVPELASRDHVKRMLPLIRQVLDEAGCVATEIDAIAYTAGPGLVGALLVGASCAQALAFAWDIPAIGVHHMEGHLLAPMLEENPPQFPFVALLVSGGHTQLVRVDGIGQYELLGESLDDAAGEAFDKTAKLIGLNYPGGPEIARLAERGVPGRFVFPRPMTDRPGLAFSFSGLKTFALNTWQQCRDAGDDNEQTRCDVSLAFQQAVVETLTIKCKRALKQTGLKRLVIAGGVSANKALRASLEDMLGSIKGNVYYARPQFCTDNGAMIAYAGCQRLLAGQQQDLAISVQARWPMEQLPPL</sequence>
<name>TSAD_PSEPW</name>
<protein>
    <recommendedName>
        <fullName evidence="1">tRNA N6-adenosine threonylcarbamoyltransferase</fullName>
        <ecNumber evidence="1">2.3.1.234</ecNumber>
    </recommendedName>
    <alternativeName>
        <fullName evidence="1">N6-L-threonylcarbamoyladenine synthase</fullName>
        <shortName evidence="1">t(6)A synthase</shortName>
    </alternativeName>
    <alternativeName>
        <fullName evidence="1">t(6)A37 threonylcarbamoyladenosine biosynthesis protein TsaD</fullName>
    </alternativeName>
    <alternativeName>
        <fullName evidence="1">tRNA threonylcarbamoyladenosine biosynthesis protein TsaD</fullName>
    </alternativeName>
</protein>
<dbReference type="EC" id="2.3.1.234" evidence="1"/>
<dbReference type="EMBL" id="CP000949">
    <property type="protein sequence ID" value="ACA75288.1"/>
    <property type="molecule type" value="Genomic_DNA"/>
</dbReference>
<dbReference type="SMR" id="B1JDY5"/>
<dbReference type="STRING" id="390235.PputW619_4812"/>
<dbReference type="KEGG" id="ppw:PputW619_4812"/>
<dbReference type="eggNOG" id="COG0533">
    <property type="taxonomic scope" value="Bacteria"/>
</dbReference>
<dbReference type="HOGENOM" id="CLU_023208_0_0_6"/>
<dbReference type="OrthoDB" id="9806197at2"/>
<dbReference type="GO" id="GO:0005737">
    <property type="term" value="C:cytoplasm"/>
    <property type="evidence" value="ECO:0007669"/>
    <property type="project" value="UniProtKB-SubCell"/>
</dbReference>
<dbReference type="GO" id="GO:0005506">
    <property type="term" value="F:iron ion binding"/>
    <property type="evidence" value="ECO:0007669"/>
    <property type="project" value="UniProtKB-UniRule"/>
</dbReference>
<dbReference type="GO" id="GO:0061711">
    <property type="term" value="F:N(6)-L-threonylcarbamoyladenine synthase activity"/>
    <property type="evidence" value="ECO:0007669"/>
    <property type="project" value="UniProtKB-EC"/>
</dbReference>
<dbReference type="GO" id="GO:0002949">
    <property type="term" value="P:tRNA threonylcarbamoyladenosine modification"/>
    <property type="evidence" value="ECO:0007669"/>
    <property type="project" value="UniProtKB-UniRule"/>
</dbReference>
<dbReference type="CDD" id="cd24133">
    <property type="entry name" value="ASKHA_NBD_TsaD_bac"/>
    <property type="match status" value="1"/>
</dbReference>
<dbReference type="FunFam" id="3.30.420.40:FF:000012">
    <property type="entry name" value="tRNA N6-adenosine threonylcarbamoyltransferase"/>
    <property type="match status" value="1"/>
</dbReference>
<dbReference type="FunFam" id="3.30.420.40:FF:000031">
    <property type="entry name" value="tRNA N6-adenosine threonylcarbamoyltransferase"/>
    <property type="match status" value="1"/>
</dbReference>
<dbReference type="Gene3D" id="3.30.420.40">
    <property type="match status" value="2"/>
</dbReference>
<dbReference type="HAMAP" id="MF_01445">
    <property type="entry name" value="TsaD"/>
    <property type="match status" value="1"/>
</dbReference>
<dbReference type="InterPro" id="IPR043129">
    <property type="entry name" value="ATPase_NBD"/>
</dbReference>
<dbReference type="InterPro" id="IPR000905">
    <property type="entry name" value="Gcp-like_dom"/>
</dbReference>
<dbReference type="InterPro" id="IPR017861">
    <property type="entry name" value="KAE1/TsaD"/>
</dbReference>
<dbReference type="InterPro" id="IPR022450">
    <property type="entry name" value="TsaD"/>
</dbReference>
<dbReference type="NCBIfam" id="TIGR00329">
    <property type="entry name" value="gcp_kae1"/>
    <property type="match status" value="1"/>
</dbReference>
<dbReference type="NCBIfam" id="TIGR03723">
    <property type="entry name" value="T6A_TsaD_YgjD"/>
    <property type="match status" value="1"/>
</dbReference>
<dbReference type="PANTHER" id="PTHR11735">
    <property type="entry name" value="TRNA N6-ADENOSINE THREONYLCARBAMOYLTRANSFERASE"/>
    <property type="match status" value="1"/>
</dbReference>
<dbReference type="PANTHER" id="PTHR11735:SF6">
    <property type="entry name" value="TRNA N6-ADENOSINE THREONYLCARBAMOYLTRANSFERASE, MITOCHONDRIAL"/>
    <property type="match status" value="1"/>
</dbReference>
<dbReference type="Pfam" id="PF00814">
    <property type="entry name" value="TsaD"/>
    <property type="match status" value="1"/>
</dbReference>
<dbReference type="PRINTS" id="PR00789">
    <property type="entry name" value="OSIALOPTASE"/>
</dbReference>
<dbReference type="SUPFAM" id="SSF53067">
    <property type="entry name" value="Actin-like ATPase domain"/>
    <property type="match status" value="2"/>
</dbReference>
<accession>B1JDY5</accession>
<proteinExistence type="inferred from homology"/>
<comment type="function">
    <text evidence="1">Required for the formation of a threonylcarbamoyl group on adenosine at position 37 (t(6)A37) in tRNAs that read codons beginning with adenine. Is involved in the transfer of the threonylcarbamoyl moiety of threonylcarbamoyl-AMP (TC-AMP) to the N6 group of A37, together with TsaE and TsaB. TsaD likely plays a direct catalytic role in this reaction.</text>
</comment>
<comment type="catalytic activity">
    <reaction evidence="1">
        <text>L-threonylcarbamoyladenylate + adenosine(37) in tRNA = N(6)-L-threonylcarbamoyladenosine(37) in tRNA + AMP + H(+)</text>
        <dbReference type="Rhea" id="RHEA:37059"/>
        <dbReference type="Rhea" id="RHEA-COMP:10162"/>
        <dbReference type="Rhea" id="RHEA-COMP:10163"/>
        <dbReference type="ChEBI" id="CHEBI:15378"/>
        <dbReference type="ChEBI" id="CHEBI:73682"/>
        <dbReference type="ChEBI" id="CHEBI:74411"/>
        <dbReference type="ChEBI" id="CHEBI:74418"/>
        <dbReference type="ChEBI" id="CHEBI:456215"/>
        <dbReference type="EC" id="2.3.1.234"/>
    </reaction>
</comment>
<comment type="cofactor">
    <cofactor evidence="1">
        <name>Fe(2+)</name>
        <dbReference type="ChEBI" id="CHEBI:29033"/>
    </cofactor>
    <text evidence="1">Binds 1 Fe(2+) ion per subunit.</text>
</comment>
<comment type="subcellular location">
    <subcellularLocation>
        <location evidence="1">Cytoplasm</location>
    </subcellularLocation>
</comment>
<comment type="similarity">
    <text evidence="1">Belongs to the KAE1 / TsaD family.</text>
</comment>
<keyword id="KW-0012">Acyltransferase</keyword>
<keyword id="KW-0963">Cytoplasm</keyword>
<keyword id="KW-0408">Iron</keyword>
<keyword id="KW-0479">Metal-binding</keyword>
<keyword id="KW-0808">Transferase</keyword>
<keyword id="KW-0819">tRNA processing</keyword>
<evidence type="ECO:0000255" key="1">
    <source>
        <dbReference type="HAMAP-Rule" id="MF_01445"/>
    </source>
</evidence>
<feature type="chain" id="PRO_1000192695" description="tRNA N6-adenosine threonylcarbamoyltransferase">
    <location>
        <begin position="1"/>
        <end position="341"/>
    </location>
</feature>
<feature type="binding site" evidence="1">
    <location>
        <position position="111"/>
    </location>
    <ligand>
        <name>Fe cation</name>
        <dbReference type="ChEBI" id="CHEBI:24875"/>
    </ligand>
</feature>
<feature type="binding site" evidence="1">
    <location>
        <position position="115"/>
    </location>
    <ligand>
        <name>Fe cation</name>
        <dbReference type="ChEBI" id="CHEBI:24875"/>
    </ligand>
</feature>
<feature type="binding site" evidence="1">
    <location>
        <begin position="134"/>
        <end position="138"/>
    </location>
    <ligand>
        <name>substrate</name>
    </ligand>
</feature>
<feature type="binding site" evidence="1">
    <location>
        <position position="167"/>
    </location>
    <ligand>
        <name>substrate</name>
    </ligand>
</feature>
<feature type="binding site" evidence="1">
    <location>
        <position position="180"/>
    </location>
    <ligand>
        <name>substrate</name>
    </ligand>
</feature>
<feature type="binding site" evidence="1">
    <location>
        <position position="276"/>
    </location>
    <ligand>
        <name>substrate</name>
    </ligand>
</feature>
<feature type="binding site" evidence="1">
    <location>
        <position position="304"/>
    </location>
    <ligand>
        <name>Fe cation</name>
        <dbReference type="ChEBI" id="CHEBI:24875"/>
    </ligand>
</feature>
<organism>
    <name type="scientific">Pseudomonas putida (strain W619)</name>
    <dbReference type="NCBI Taxonomy" id="390235"/>
    <lineage>
        <taxon>Bacteria</taxon>
        <taxon>Pseudomonadati</taxon>
        <taxon>Pseudomonadota</taxon>
        <taxon>Gammaproteobacteria</taxon>
        <taxon>Pseudomonadales</taxon>
        <taxon>Pseudomonadaceae</taxon>
        <taxon>Pseudomonas</taxon>
    </lineage>
</organism>
<reference key="1">
    <citation type="submission" date="2008-02" db="EMBL/GenBank/DDBJ databases">
        <title>Complete sequence of Pseudomonas putida W619.</title>
        <authorList>
            <person name="Copeland A."/>
            <person name="Lucas S."/>
            <person name="Lapidus A."/>
            <person name="Barry K."/>
            <person name="Detter J.C."/>
            <person name="Glavina del Rio T."/>
            <person name="Dalin E."/>
            <person name="Tice H."/>
            <person name="Pitluck S."/>
            <person name="Chain P."/>
            <person name="Malfatti S."/>
            <person name="Shin M."/>
            <person name="Vergez L."/>
            <person name="Schmutz J."/>
            <person name="Larimer F."/>
            <person name="Land M."/>
            <person name="Hauser L."/>
            <person name="Kyrpides N."/>
            <person name="Kim E."/>
            <person name="Taghavi S."/>
            <person name="Vangronsveld D."/>
            <person name="van der Lelie D."/>
            <person name="Richardson P."/>
        </authorList>
    </citation>
    <scope>NUCLEOTIDE SEQUENCE [LARGE SCALE GENOMIC DNA]</scope>
    <source>
        <strain>W619</strain>
    </source>
</reference>